<gene>
    <name evidence="1" type="primary">rpl15e</name>
    <name type="ordered locus">MmarC7_1301</name>
</gene>
<reference key="1">
    <citation type="submission" date="2007-06" db="EMBL/GenBank/DDBJ databases">
        <title>Complete sequence of Methanococcus maripaludis C7.</title>
        <authorList>
            <consortium name="US DOE Joint Genome Institute"/>
            <person name="Copeland A."/>
            <person name="Lucas S."/>
            <person name="Lapidus A."/>
            <person name="Barry K."/>
            <person name="Glavina del Rio T."/>
            <person name="Dalin E."/>
            <person name="Tice H."/>
            <person name="Pitluck S."/>
            <person name="Clum A."/>
            <person name="Schmutz J."/>
            <person name="Larimer F."/>
            <person name="Land M."/>
            <person name="Hauser L."/>
            <person name="Kyrpides N."/>
            <person name="Anderson I."/>
            <person name="Sieprawska-Lupa M."/>
            <person name="Whitman W.B."/>
            <person name="Richardson P."/>
        </authorList>
    </citation>
    <scope>NUCLEOTIDE SEQUENCE [LARGE SCALE GENOMIC DNA]</scope>
    <source>
        <strain>C7 / ATCC BAA-1331</strain>
    </source>
</reference>
<protein>
    <recommendedName>
        <fullName evidence="1">Large ribosomal subunit protein eL15</fullName>
    </recommendedName>
    <alternativeName>
        <fullName evidence="3">50S ribosomal protein L15e</fullName>
    </alternativeName>
</protein>
<dbReference type="EMBL" id="CP000745">
    <property type="protein sequence ID" value="ABR66364.1"/>
    <property type="molecule type" value="Genomic_DNA"/>
</dbReference>
<dbReference type="SMR" id="A6VIT8"/>
<dbReference type="STRING" id="426368.MmarC7_1301"/>
<dbReference type="KEGG" id="mmz:MmarC7_1301"/>
<dbReference type="eggNOG" id="arCOG04209">
    <property type="taxonomic scope" value="Archaea"/>
</dbReference>
<dbReference type="HOGENOM" id="CLU_080796_1_0_2"/>
<dbReference type="OrthoDB" id="8183at2157"/>
<dbReference type="GO" id="GO:0022625">
    <property type="term" value="C:cytosolic large ribosomal subunit"/>
    <property type="evidence" value="ECO:0007669"/>
    <property type="project" value="TreeGrafter"/>
</dbReference>
<dbReference type="GO" id="GO:0003723">
    <property type="term" value="F:RNA binding"/>
    <property type="evidence" value="ECO:0007669"/>
    <property type="project" value="TreeGrafter"/>
</dbReference>
<dbReference type="GO" id="GO:0003735">
    <property type="term" value="F:structural constituent of ribosome"/>
    <property type="evidence" value="ECO:0007669"/>
    <property type="project" value="InterPro"/>
</dbReference>
<dbReference type="GO" id="GO:0002181">
    <property type="term" value="P:cytoplasmic translation"/>
    <property type="evidence" value="ECO:0007669"/>
    <property type="project" value="TreeGrafter"/>
</dbReference>
<dbReference type="FunFam" id="3.40.1120.10:FF:000002">
    <property type="entry name" value="50S ribosomal protein L15e"/>
    <property type="match status" value="1"/>
</dbReference>
<dbReference type="Gene3D" id="3.40.1120.10">
    <property type="entry name" value="Ribosomal protein l15e"/>
    <property type="match status" value="1"/>
</dbReference>
<dbReference type="HAMAP" id="MF_00256">
    <property type="entry name" value="Ribosomal_eL15"/>
    <property type="match status" value="1"/>
</dbReference>
<dbReference type="InterPro" id="IPR024794">
    <property type="entry name" value="Rbsml_eL15_core_dom_sf"/>
</dbReference>
<dbReference type="InterPro" id="IPR000439">
    <property type="entry name" value="Ribosomal_eL15"/>
</dbReference>
<dbReference type="InterPro" id="IPR020926">
    <property type="entry name" value="Ribosomal_eL15_arc"/>
</dbReference>
<dbReference type="InterPro" id="IPR020925">
    <property type="entry name" value="Ribosomal_eL15_CS"/>
</dbReference>
<dbReference type="InterPro" id="IPR012678">
    <property type="entry name" value="Ribosomal_uL23/eL15/eS24_sf"/>
</dbReference>
<dbReference type="NCBIfam" id="NF003269">
    <property type="entry name" value="PRK04243.1"/>
    <property type="match status" value="1"/>
</dbReference>
<dbReference type="PANTHER" id="PTHR11847:SF4">
    <property type="entry name" value="LARGE RIBOSOMAL SUBUNIT PROTEIN EL15"/>
    <property type="match status" value="1"/>
</dbReference>
<dbReference type="PANTHER" id="PTHR11847">
    <property type="entry name" value="RIBOSOMAL PROTEIN L15"/>
    <property type="match status" value="1"/>
</dbReference>
<dbReference type="Pfam" id="PF00827">
    <property type="entry name" value="Ribosomal_L15e"/>
    <property type="match status" value="1"/>
</dbReference>
<dbReference type="SMART" id="SM01384">
    <property type="entry name" value="Ribosomal_L15e"/>
    <property type="match status" value="1"/>
</dbReference>
<dbReference type="SUPFAM" id="SSF54189">
    <property type="entry name" value="Ribosomal proteins S24e, L23 and L15e"/>
    <property type="match status" value="1"/>
</dbReference>
<dbReference type="PROSITE" id="PS01194">
    <property type="entry name" value="RIBOSOMAL_L15E"/>
    <property type="match status" value="1"/>
</dbReference>
<comment type="similarity">
    <text evidence="1">Belongs to the eukaryotic ribosomal protein eL15 family.</text>
</comment>
<accession>A6VIT8</accession>
<name>RL15E_METM7</name>
<proteinExistence type="inferred from homology"/>
<evidence type="ECO:0000255" key="1">
    <source>
        <dbReference type="HAMAP-Rule" id="MF_00256"/>
    </source>
</evidence>
<evidence type="ECO:0000256" key="2">
    <source>
        <dbReference type="SAM" id="MobiDB-lite"/>
    </source>
</evidence>
<evidence type="ECO:0000305" key="3"/>
<organism>
    <name type="scientific">Methanococcus maripaludis (strain C7 / ATCC BAA-1331)</name>
    <dbReference type="NCBI Taxonomy" id="426368"/>
    <lineage>
        <taxon>Archaea</taxon>
        <taxon>Methanobacteriati</taxon>
        <taxon>Methanobacteriota</taxon>
        <taxon>Methanomada group</taxon>
        <taxon>Methanococci</taxon>
        <taxon>Methanococcales</taxon>
        <taxon>Methanococcaceae</taxon>
        <taxon>Methanococcus</taxon>
    </lineage>
</organism>
<feature type="chain" id="PRO_1000003427" description="Large ribosomal subunit protein eL15">
    <location>
        <begin position="1"/>
        <end position="194"/>
    </location>
</feature>
<feature type="region of interest" description="Disordered" evidence="2">
    <location>
        <begin position="160"/>
        <end position="194"/>
    </location>
</feature>
<keyword id="KW-0687">Ribonucleoprotein</keyword>
<keyword id="KW-0689">Ribosomal protein</keyword>
<sequence length="194" mass="22273">MSMYNYVKEAWKVPANSYVKELQWSRMQDWRKEPSVIRVERPTRIDRARNLGYKAKQGIVVVRVSVRRGGLRKPRPKHSKKPSTLGINKITMAKSIQRIAEERAAKKYPNLEVLNSYWVGQDGKQKWYEVILVDSCHPSIKSDKSYNWLCKGTHKGRATRGLTSAGKKGRGLMYKGKGTEKVRPSVRANSKKAK</sequence>